<feature type="chain" id="PRO_1000071578" description="3-dehydroquinate dehydratase">
    <location>
        <begin position="1"/>
        <end position="159"/>
    </location>
</feature>
<feature type="active site" description="Proton acceptor" evidence="1">
    <location>
        <position position="22"/>
    </location>
</feature>
<feature type="active site" description="Proton donor" evidence="1">
    <location>
        <position position="99"/>
    </location>
</feature>
<feature type="binding site" evidence="1">
    <location>
        <position position="73"/>
    </location>
    <ligand>
        <name>substrate</name>
    </ligand>
</feature>
<feature type="binding site" evidence="1">
    <location>
        <position position="79"/>
    </location>
    <ligand>
        <name>substrate</name>
    </ligand>
</feature>
<feature type="binding site" evidence="1">
    <location>
        <position position="86"/>
    </location>
    <ligand>
        <name>substrate</name>
    </ligand>
</feature>
<feature type="binding site" evidence="1">
    <location>
        <begin position="100"/>
        <end position="101"/>
    </location>
    <ligand>
        <name>substrate</name>
    </ligand>
</feature>
<feature type="binding site" evidence="1">
    <location>
        <position position="110"/>
    </location>
    <ligand>
        <name>substrate</name>
    </ligand>
</feature>
<feature type="site" description="Transition state stabilizer" evidence="1">
    <location>
        <position position="17"/>
    </location>
</feature>
<organism>
    <name type="scientific">Campylobacter jejuni subsp. jejuni serotype O:6 (strain 81116 / NCTC 11828)</name>
    <dbReference type="NCBI Taxonomy" id="407148"/>
    <lineage>
        <taxon>Bacteria</taxon>
        <taxon>Pseudomonadati</taxon>
        <taxon>Campylobacterota</taxon>
        <taxon>Epsilonproteobacteria</taxon>
        <taxon>Campylobacterales</taxon>
        <taxon>Campylobacteraceae</taxon>
        <taxon>Campylobacter</taxon>
    </lineage>
</organism>
<protein>
    <recommendedName>
        <fullName evidence="1">3-dehydroquinate dehydratase</fullName>
        <shortName evidence="1">3-dehydroquinase</shortName>
        <ecNumber evidence="1">4.2.1.10</ecNumber>
    </recommendedName>
    <alternativeName>
        <fullName evidence="1">Type II DHQase</fullName>
    </alternativeName>
</protein>
<comment type="function">
    <text evidence="1">Catalyzes a trans-dehydration via an enolate intermediate.</text>
</comment>
<comment type="catalytic activity">
    <reaction evidence="1">
        <text>3-dehydroquinate = 3-dehydroshikimate + H2O</text>
        <dbReference type="Rhea" id="RHEA:21096"/>
        <dbReference type="ChEBI" id="CHEBI:15377"/>
        <dbReference type="ChEBI" id="CHEBI:16630"/>
        <dbReference type="ChEBI" id="CHEBI:32364"/>
        <dbReference type="EC" id="4.2.1.10"/>
    </reaction>
</comment>
<comment type="pathway">
    <text evidence="1">Metabolic intermediate biosynthesis; chorismate biosynthesis; chorismate from D-erythrose 4-phosphate and phosphoenolpyruvate: step 3/7.</text>
</comment>
<comment type="subunit">
    <text evidence="1">Homododecamer.</text>
</comment>
<comment type="similarity">
    <text evidence="1">Belongs to the type-II 3-dehydroquinase family.</text>
</comment>
<name>AROQ_CAMJ8</name>
<keyword id="KW-0028">Amino-acid biosynthesis</keyword>
<keyword id="KW-0057">Aromatic amino acid biosynthesis</keyword>
<keyword id="KW-0456">Lyase</keyword>
<dbReference type="EC" id="4.2.1.10" evidence="1"/>
<dbReference type="EMBL" id="CP000814">
    <property type="protein sequence ID" value="ABV51659.1"/>
    <property type="molecule type" value="Genomic_DNA"/>
</dbReference>
<dbReference type="RefSeq" id="WP_002852001.1">
    <property type="nucleotide sequence ID" value="NC_009839.1"/>
</dbReference>
<dbReference type="SMR" id="A8FJM2"/>
<dbReference type="KEGG" id="cju:C8J_0059"/>
<dbReference type="HOGENOM" id="CLU_090968_2_0_7"/>
<dbReference type="UniPathway" id="UPA00053">
    <property type="reaction ID" value="UER00086"/>
</dbReference>
<dbReference type="GO" id="GO:0003855">
    <property type="term" value="F:3-dehydroquinate dehydratase activity"/>
    <property type="evidence" value="ECO:0007669"/>
    <property type="project" value="UniProtKB-UniRule"/>
</dbReference>
<dbReference type="GO" id="GO:0008652">
    <property type="term" value="P:amino acid biosynthetic process"/>
    <property type="evidence" value="ECO:0007669"/>
    <property type="project" value="UniProtKB-KW"/>
</dbReference>
<dbReference type="GO" id="GO:0009073">
    <property type="term" value="P:aromatic amino acid family biosynthetic process"/>
    <property type="evidence" value="ECO:0007669"/>
    <property type="project" value="UniProtKB-KW"/>
</dbReference>
<dbReference type="GO" id="GO:0009423">
    <property type="term" value="P:chorismate biosynthetic process"/>
    <property type="evidence" value="ECO:0007669"/>
    <property type="project" value="UniProtKB-UniRule"/>
</dbReference>
<dbReference type="GO" id="GO:0019631">
    <property type="term" value="P:quinate catabolic process"/>
    <property type="evidence" value="ECO:0007669"/>
    <property type="project" value="TreeGrafter"/>
</dbReference>
<dbReference type="CDD" id="cd00466">
    <property type="entry name" value="DHQase_II"/>
    <property type="match status" value="1"/>
</dbReference>
<dbReference type="Gene3D" id="3.40.50.9100">
    <property type="entry name" value="Dehydroquinase, class II"/>
    <property type="match status" value="1"/>
</dbReference>
<dbReference type="HAMAP" id="MF_00169">
    <property type="entry name" value="AroQ"/>
    <property type="match status" value="1"/>
</dbReference>
<dbReference type="InterPro" id="IPR001874">
    <property type="entry name" value="DHquinase_II"/>
</dbReference>
<dbReference type="InterPro" id="IPR018509">
    <property type="entry name" value="DHquinase_II_CS"/>
</dbReference>
<dbReference type="InterPro" id="IPR036441">
    <property type="entry name" value="DHquinase_II_sf"/>
</dbReference>
<dbReference type="NCBIfam" id="TIGR01088">
    <property type="entry name" value="aroQ"/>
    <property type="match status" value="1"/>
</dbReference>
<dbReference type="NCBIfam" id="NF003805">
    <property type="entry name" value="PRK05395.1-2"/>
    <property type="match status" value="1"/>
</dbReference>
<dbReference type="NCBIfam" id="NF003806">
    <property type="entry name" value="PRK05395.1-3"/>
    <property type="match status" value="1"/>
</dbReference>
<dbReference type="NCBIfam" id="NF003807">
    <property type="entry name" value="PRK05395.1-4"/>
    <property type="match status" value="1"/>
</dbReference>
<dbReference type="PANTHER" id="PTHR21272">
    <property type="entry name" value="CATABOLIC 3-DEHYDROQUINASE"/>
    <property type="match status" value="1"/>
</dbReference>
<dbReference type="PANTHER" id="PTHR21272:SF3">
    <property type="entry name" value="CATABOLIC 3-DEHYDROQUINASE"/>
    <property type="match status" value="1"/>
</dbReference>
<dbReference type="Pfam" id="PF01220">
    <property type="entry name" value="DHquinase_II"/>
    <property type="match status" value="1"/>
</dbReference>
<dbReference type="PIRSF" id="PIRSF001399">
    <property type="entry name" value="DHquinase_II"/>
    <property type="match status" value="1"/>
</dbReference>
<dbReference type="SUPFAM" id="SSF52304">
    <property type="entry name" value="Type II 3-dehydroquinate dehydratase"/>
    <property type="match status" value="1"/>
</dbReference>
<dbReference type="PROSITE" id="PS01029">
    <property type="entry name" value="DEHYDROQUINASE_II"/>
    <property type="match status" value="1"/>
</dbReference>
<sequence length="159" mass="17595">MKIMIIQGPNVNMLGVREVGIYGAMKMEEIHEQMKLAASQNNVELDFFQSNFEGEIVDKIQECLGTVDGIIINAAGYTHTSVAIRDAIAAVALPTIEVHISNVYRREEFRQKSLIAPVCSGTIVGFGPFGYHLALMGIIQICEQIKNLRAMQQAQQTNK</sequence>
<evidence type="ECO:0000255" key="1">
    <source>
        <dbReference type="HAMAP-Rule" id="MF_00169"/>
    </source>
</evidence>
<gene>
    <name evidence="1" type="primary">aroQ</name>
    <name type="ordered locus">C8J_0059</name>
</gene>
<accession>A8FJM2</accession>
<proteinExistence type="inferred from homology"/>
<reference key="1">
    <citation type="journal article" date="2007" name="J. Bacteriol.">
        <title>The complete genome sequence of Campylobacter jejuni strain 81116 (NCTC11828).</title>
        <authorList>
            <person name="Pearson B.M."/>
            <person name="Gaskin D.J.H."/>
            <person name="Segers R.P.A.M."/>
            <person name="Wells J.M."/>
            <person name="Nuijten P.J.M."/>
            <person name="van Vliet A.H.M."/>
        </authorList>
    </citation>
    <scope>NUCLEOTIDE SEQUENCE [LARGE SCALE GENOMIC DNA]</scope>
    <source>
        <strain>81116 / NCTC 11828</strain>
    </source>
</reference>